<sequence>MDFNNYIGLESDDRLNAFMATLSVTNRTPEYYVNWEKVERETRKFELELNTLNYLIGKEDIYSEALELFTNQPELLKAIPSLIASRDTSLDILNIDENDDMSFEQLNFLVIDENCIADYVDFINQAGLLDFLQNKAKRSLVDYVYGVEAGLDSNARKTRSGTTMEGILERTVSKIAQGKGLDWKPQATASFIKSQWDIEVPVDKSKRRFDAAVYSRALNKVWLIETNYYGGGGSKLKAVAGEFTELSQFVKTSKDNVEFVWVTDGQGWKFSRLPLAEAFGHIDNVFNLTMLKEGFLSDLFEKEI</sequence>
<feature type="chain" id="PRO_0000077328" description="Type II restriction enzyme LlaDCHI">
    <location>
        <begin position="1"/>
        <end position="304"/>
    </location>
</feature>
<protein>
    <recommendedName>
        <fullName evidence="2">Type II restriction enzyme LlaDCHI</fullName>
        <shortName>R.LlaDCHI</shortName>
        <ecNumber evidence="5">3.1.21.4</ecNumber>
    </recommendedName>
    <alternativeName>
        <fullName>Endonuclease LlaDCHI</fullName>
    </alternativeName>
    <alternativeName>
        <fullName>LlaII</fullName>
    </alternativeName>
    <alternativeName>
        <fullName>Type-2 restriction enzyme LlaDCHI</fullName>
    </alternativeName>
</protein>
<keyword id="KW-0255">Endonuclease</keyword>
<keyword id="KW-0378">Hydrolase</keyword>
<keyword id="KW-0540">Nuclease</keyword>
<keyword id="KW-0614">Plasmid</keyword>
<keyword id="KW-0680">Restriction system</keyword>
<organism>
    <name type="scientific">Lactococcus lactis subsp. cremoris</name>
    <name type="common">Streptococcus cremoris</name>
    <dbReference type="NCBI Taxonomy" id="1359"/>
    <lineage>
        <taxon>Bacteria</taxon>
        <taxon>Bacillati</taxon>
        <taxon>Bacillota</taxon>
        <taxon>Bacilli</taxon>
        <taxon>Lactobacillales</taxon>
        <taxon>Streptococcaceae</taxon>
        <taxon>Lactococcus</taxon>
    </lineage>
</organism>
<proteinExistence type="inferred from homology"/>
<evidence type="ECO:0000269" key="1">
    <source>
    </source>
</evidence>
<evidence type="ECO:0000303" key="2">
    <source>
    </source>
</evidence>
<evidence type="ECO:0000303" key="3">
    <source>
    </source>
</evidence>
<evidence type="ECO:0000305" key="4"/>
<evidence type="ECO:0000305" key="5">
    <source>
    </source>
</evidence>
<accession>P50177</accession>
<reference key="1">
    <citation type="journal article" date="1995" name="Appl. Environ. Microbiol.">
        <title>Cloning and sequencing of LlaDCHI restriction/modification genes from Lactococcus lactis and relatedness of this system to the Streptococcus pneumoniae DpnII system.</title>
        <authorList>
            <person name="Moineau S."/>
            <person name="Walker S.A."/>
            <person name="Vedamuthu E.R."/>
            <person name="Vandenbergh P.A."/>
        </authorList>
    </citation>
    <scope>NUCLEOTIDE SEQUENCE [GENOMIC DNA]</scope>
    <scope>FUNCTION</scope>
    <source>
        <strain>DCH-4</strain>
    </source>
</reference>
<reference key="2">
    <citation type="journal article" date="2003" name="Nucleic Acids Res.">
        <title>A nomenclature for restriction enzymes, DNA methyltransferases, homing endonucleases and their genes.</title>
        <authorList>
            <person name="Roberts R.J."/>
            <person name="Belfort M."/>
            <person name="Bestor T."/>
            <person name="Bhagwat A.S."/>
            <person name="Bickle T.A."/>
            <person name="Bitinaite J."/>
            <person name="Blumenthal R.M."/>
            <person name="Degtyarev S.K."/>
            <person name="Dryden D.T."/>
            <person name="Dybvig K."/>
            <person name="Firman K."/>
            <person name="Gromova E.S."/>
            <person name="Gumport R.I."/>
            <person name="Halford S.E."/>
            <person name="Hattman S."/>
            <person name="Heitman J."/>
            <person name="Hornby D.P."/>
            <person name="Janulaitis A."/>
            <person name="Jeltsch A."/>
            <person name="Josephsen J."/>
            <person name="Kiss A."/>
            <person name="Klaenhammer T.R."/>
            <person name="Kobayashi I."/>
            <person name="Kong H."/>
            <person name="Krueger D.H."/>
            <person name="Lacks S."/>
            <person name="Marinus M.G."/>
            <person name="Miyahara M."/>
            <person name="Morgan R.D."/>
            <person name="Murray N.E."/>
            <person name="Nagaraja V."/>
            <person name="Piekarowicz A."/>
            <person name="Pingoud A."/>
            <person name="Raleigh E."/>
            <person name="Rao D.N."/>
            <person name="Reich N."/>
            <person name="Repin V.E."/>
            <person name="Selker E.U."/>
            <person name="Shaw P.C."/>
            <person name="Stein D.C."/>
            <person name="Stoddard B.L."/>
            <person name="Szybalski W."/>
            <person name="Trautner T.A."/>
            <person name="Van Etten J.L."/>
            <person name="Vitor J.M."/>
            <person name="Wilson G.G."/>
            <person name="Xu S.Y."/>
        </authorList>
    </citation>
    <scope>NOMENCLATURE</scope>
    <scope>SUBTYPE</scope>
</reference>
<dbReference type="EC" id="3.1.21.4" evidence="5"/>
<dbReference type="EMBL" id="U16027">
    <property type="protein sequence ID" value="AAB06313.1"/>
    <property type="molecule type" value="Genomic_DNA"/>
</dbReference>
<dbReference type="RefSeq" id="NP_116731.1">
    <property type="nucleotide sequence ID" value="NC_002798.1"/>
</dbReference>
<dbReference type="REBASE" id="249491">
    <property type="entry name" value="WciM2ORF523P"/>
</dbReference>
<dbReference type="REBASE" id="2772">
    <property type="entry name" value="LlaDCHI"/>
</dbReference>
<dbReference type="PRO" id="PR:P50177"/>
<dbReference type="GO" id="GO:0003677">
    <property type="term" value="F:DNA binding"/>
    <property type="evidence" value="ECO:0007669"/>
    <property type="project" value="InterPro"/>
</dbReference>
<dbReference type="GO" id="GO:0009036">
    <property type="term" value="F:type II site-specific deoxyribonuclease activity"/>
    <property type="evidence" value="ECO:0007669"/>
    <property type="project" value="UniProtKB-EC"/>
</dbReference>
<dbReference type="GO" id="GO:0009307">
    <property type="term" value="P:DNA restriction-modification system"/>
    <property type="evidence" value="ECO:0007669"/>
    <property type="project" value="UniProtKB-KW"/>
</dbReference>
<dbReference type="InterPro" id="IPR021191">
    <property type="entry name" value="Restrct_endonuc_II_DpnII"/>
</dbReference>
<dbReference type="InterPro" id="IPR007637">
    <property type="entry name" value="Restrct_endonuc_II_DpnII-like"/>
</dbReference>
<dbReference type="Pfam" id="PF04556">
    <property type="entry name" value="DpnII"/>
    <property type="match status" value="1"/>
</dbReference>
<dbReference type="PIRSF" id="PIRSF016080">
    <property type="entry name" value="Restrict_endonuc_II_DpmII"/>
    <property type="match status" value="1"/>
</dbReference>
<comment type="function">
    <text evidence="2 5">A P subtype restriction enzyme that recognizes the double-stranded unmethylated sequence 5'-GATC-3' and cleaves before G-1.</text>
</comment>
<comment type="catalytic activity">
    <reaction evidence="5">
        <text>Endonucleolytic cleavage of DNA to give specific double-stranded fragments with terminal 5'-phosphates.</text>
        <dbReference type="EC" id="3.1.21.4"/>
    </reaction>
</comment>
<comment type="miscellaneous">
    <text evidence="1">The LlaDCHI restriction system has two different methylases.</text>
</comment>
<comment type="miscellaneous">
    <text evidence="5">Genes encoded on plasmid pSQR700 confer strong resistance to the three most common lactococcal phage species (936, c2, and P335). Its presence is probably one reason for the strong bacteriophage resistance shown by strain DCH-4 over the years.</text>
</comment>
<comment type="similarity">
    <text evidence="4">Belongs to the DpnII type II restriction endonuclease family.</text>
</comment>
<name>T2L2_LACLC</name>
<gene>
    <name type="primary">llaDCHIR</name>
    <name evidence="3" type="synonym">llaIIC</name>
</gene>
<geneLocation type="plasmid">
    <name>pSRQ700</name>
</geneLocation>